<gene>
    <name type="primary">mokB</name>
    <name type="ordered locus">b1420</name>
    <name type="ordered locus">JW5882</name>
</gene>
<accession>P76096</accession>
<accession>Q2MBC3</accession>
<proteinExistence type="predicted"/>
<keyword id="KW-1185">Reference proteome</keyword>
<reference key="1">
    <citation type="journal article" date="1997" name="Science">
        <title>The complete genome sequence of Escherichia coli K-12.</title>
        <authorList>
            <person name="Blattner F.R."/>
            <person name="Plunkett G. III"/>
            <person name="Bloch C.A."/>
            <person name="Perna N.T."/>
            <person name="Burland V."/>
            <person name="Riley M."/>
            <person name="Collado-Vides J."/>
            <person name="Glasner J.D."/>
            <person name="Rode C.K."/>
            <person name="Mayhew G.F."/>
            <person name="Gregor J."/>
            <person name="Davis N.W."/>
            <person name="Kirkpatrick H.A."/>
            <person name="Goeden M.A."/>
            <person name="Rose D.J."/>
            <person name="Mau B."/>
            <person name="Shao Y."/>
        </authorList>
    </citation>
    <scope>NUCLEOTIDE SEQUENCE [LARGE SCALE GENOMIC DNA]</scope>
    <source>
        <strain>K12 / MG1655 / ATCC 47076</strain>
    </source>
</reference>
<reference key="2">
    <citation type="journal article" date="2006" name="Mol. Syst. Biol.">
        <title>Highly accurate genome sequences of Escherichia coli K-12 strains MG1655 and W3110.</title>
        <authorList>
            <person name="Hayashi K."/>
            <person name="Morooka N."/>
            <person name="Yamamoto Y."/>
            <person name="Fujita K."/>
            <person name="Isono K."/>
            <person name="Choi S."/>
            <person name="Ohtsubo E."/>
            <person name="Baba T."/>
            <person name="Wanner B.L."/>
            <person name="Mori H."/>
            <person name="Horiuchi T."/>
        </authorList>
    </citation>
    <scope>NUCLEOTIDE SEQUENCE [LARGE SCALE GENOMIC DNA]</scope>
    <source>
        <strain>K12 / W3110 / ATCC 27325 / DSM 5911</strain>
    </source>
</reference>
<reference key="3">
    <citation type="journal article" date="1999" name="Mol. Microbiol.">
        <title>Multiple hok genes on the chromosome of Escherichia coli.</title>
        <authorList>
            <person name="Pedersen K."/>
            <person name="Gerdes K."/>
        </authorList>
    </citation>
    <scope>PROBABLE FUNCTION</scope>
</reference>
<organism>
    <name type="scientific">Escherichia coli (strain K12)</name>
    <dbReference type="NCBI Taxonomy" id="83333"/>
    <lineage>
        <taxon>Bacteria</taxon>
        <taxon>Pseudomonadati</taxon>
        <taxon>Pseudomonadota</taxon>
        <taxon>Gammaproteobacteria</taxon>
        <taxon>Enterobacterales</taxon>
        <taxon>Enterobacteriaceae</taxon>
        <taxon>Escherichia</taxon>
    </lineage>
</organism>
<dbReference type="EMBL" id="U00096">
    <property type="protein sequence ID" value="AAC74502.1"/>
    <property type="molecule type" value="Genomic_DNA"/>
</dbReference>
<dbReference type="EMBL" id="AP009048">
    <property type="protein sequence ID" value="BAE76433.1"/>
    <property type="molecule type" value="Genomic_DNA"/>
</dbReference>
<dbReference type="PIR" id="G64893">
    <property type="entry name" value="G64893"/>
</dbReference>
<dbReference type="RefSeq" id="NP_415937.1">
    <property type="nucleotide sequence ID" value="NC_000913.3"/>
</dbReference>
<dbReference type="FunCoup" id="P76096">
    <property type="interactions" value="2"/>
</dbReference>
<dbReference type="STRING" id="511145.b1420"/>
<dbReference type="PaxDb" id="511145-b1420"/>
<dbReference type="EnsemblBacteria" id="AAC74502">
    <property type="protein sequence ID" value="AAC74502"/>
    <property type="gene ID" value="b1420"/>
</dbReference>
<dbReference type="GeneID" id="948820"/>
<dbReference type="KEGG" id="ecj:JW5882"/>
<dbReference type="KEGG" id="eco:b1420"/>
<dbReference type="PATRIC" id="fig|1411691.4.peg.850"/>
<dbReference type="EchoBASE" id="EB4159"/>
<dbReference type="HOGENOM" id="CLU_3128707_0_0_6"/>
<dbReference type="InParanoid" id="P76096"/>
<dbReference type="BioCyc" id="EcoCyc:G6736-MONOMER"/>
<dbReference type="PRO" id="PR:P76096"/>
<dbReference type="Proteomes" id="UP000000625">
    <property type="component" value="Chromosome"/>
</dbReference>
<feature type="chain" id="PRO_0000244985" description="Regulatory protein MokB">
    <location>
        <begin position="1"/>
        <end position="55"/>
    </location>
</feature>
<name>MOKB_ECOLI</name>
<comment type="function">
    <text evidence="1">Overlapping regulatory peptide whose translation enables hokB expression.</text>
</comment>
<sequence>MNLAIQILASYPPSGKEKGYEAQPSGGVSAHYLHYDSDIHTPDPTNALRTAVPGR</sequence>
<evidence type="ECO:0000305" key="1"/>
<protein>
    <recommendedName>
        <fullName>Regulatory protein MokB</fullName>
    </recommendedName>
</protein>